<evidence type="ECO:0000250" key="1"/>
<evidence type="ECO:0000255" key="2">
    <source>
        <dbReference type="PROSITE-ProRule" id="PRU00981"/>
    </source>
</evidence>
<evidence type="ECO:0000256" key="3">
    <source>
        <dbReference type="SAM" id="MobiDB-lite"/>
    </source>
</evidence>
<evidence type="ECO:0000269" key="4">
    <source>
    </source>
</evidence>
<evidence type="ECO:0000305" key="5"/>
<reference key="1">
    <citation type="journal article" date="2000" name="Neuron">
        <title>Sonic hedgehog-regulated oligodendrocyte lineage genes encoding bHLH proteins in the mammalian central nervous system.</title>
        <authorList>
            <person name="Lu Q.R."/>
            <person name="Yuk D.-I."/>
            <person name="Alberta J.A."/>
            <person name="Zhu Z."/>
            <person name="Pawlitzky I."/>
            <person name="Chan J.A."/>
            <person name="McMahon A.P."/>
            <person name="Stiles C.D."/>
            <person name="Rowitch D.H."/>
        </authorList>
    </citation>
    <scope>NUCLEOTIDE SEQUENCE [MRNA]</scope>
    <scope>TISSUE SPECIFICITY</scope>
    <scope>DEVELOPMENTAL STAGE</scope>
    <scope>INDUCTION BY SHH</scope>
    <source>
        <strain>Sprague-Dawley</strain>
        <tissue>Brain cortex</tissue>
    </source>
</reference>
<organism>
    <name type="scientific">Rattus norvegicus</name>
    <name type="common">Rat</name>
    <dbReference type="NCBI Taxonomy" id="10116"/>
    <lineage>
        <taxon>Eukaryota</taxon>
        <taxon>Metazoa</taxon>
        <taxon>Chordata</taxon>
        <taxon>Craniata</taxon>
        <taxon>Vertebrata</taxon>
        <taxon>Euteleostomi</taxon>
        <taxon>Mammalia</taxon>
        <taxon>Eutheria</taxon>
        <taxon>Euarchontoglires</taxon>
        <taxon>Glires</taxon>
        <taxon>Rodentia</taxon>
        <taxon>Myomorpha</taxon>
        <taxon>Muroidea</taxon>
        <taxon>Muridae</taxon>
        <taxon>Murinae</taxon>
        <taxon>Rattus</taxon>
    </lineage>
</organism>
<sequence length="261" mass="27239">MYYAVSQARVNAAPATMLRPQRPGDVQLGASLYELVGYRQPPISSSSSTSSSSTASLLPKPAREKPEAPLAEPRGPAPESGGARADAKEEQQQQQLRRKINSRERKRMQDLNLAMDALREVILPYSAAHCQGAPGRKLSKIATLLLARNYILLLGSSLQELRRALGDGAGPAAPRLLLAGLPLLAAAPGSVLLAPGAVGPPETLRPTKYLSLALDEPPCGQFALPAGGAGSPGLCSCAVCKFPHLVPAGLGLAAVQAQFSK</sequence>
<feature type="chain" id="PRO_0000127413" description="Oligodendrocyte transcription factor 1">
    <location>
        <begin position="1"/>
        <end position="261"/>
    </location>
</feature>
<feature type="domain" description="bHLH" evidence="2">
    <location>
        <begin position="95"/>
        <end position="154"/>
    </location>
</feature>
<feature type="region of interest" description="Disordered" evidence="3">
    <location>
        <begin position="41"/>
        <end position="105"/>
    </location>
</feature>
<feature type="compositionally biased region" description="Low complexity" evidence="3">
    <location>
        <begin position="44"/>
        <end position="56"/>
    </location>
</feature>
<proteinExistence type="evidence at transcript level"/>
<accession>Q9WUQ3</accession>
<keyword id="KW-0217">Developmental protein</keyword>
<keyword id="KW-0238">DNA-binding</keyword>
<keyword id="KW-0539">Nucleus</keyword>
<keyword id="KW-1185">Reference proteome</keyword>
<keyword id="KW-0804">Transcription</keyword>
<keyword id="KW-0805">Transcription regulation</keyword>
<dbReference type="EMBL" id="AF151367">
    <property type="protein sequence ID" value="AAD34029.1"/>
    <property type="status" value="ALT_INIT"/>
    <property type="molecule type" value="mRNA"/>
</dbReference>
<dbReference type="RefSeq" id="NP_068538.2">
    <property type="nucleotide sequence ID" value="NM_021770.4"/>
</dbReference>
<dbReference type="SMR" id="Q9WUQ3"/>
<dbReference type="FunCoup" id="Q9WUQ3">
    <property type="interactions" value="199"/>
</dbReference>
<dbReference type="STRING" id="10116.ENSRNOP00000002827"/>
<dbReference type="PhosphoSitePlus" id="Q9WUQ3"/>
<dbReference type="jPOST" id="Q9WUQ3"/>
<dbReference type="PaxDb" id="10116-ENSRNOP00000002827"/>
<dbReference type="ABCD" id="Q9WUQ3">
    <property type="antibodies" value="1 sequenced antibody"/>
</dbReference>
<dbReference type="Ensembl" id="ENSRNOT00000002827.8">
    <property type="protein sequence ID" value="ENSRNOP00000002827.6"/>
    <property type="gene ID" value="ENSRNOG00000028648.7"/>
</dbReference>
<dbReference type="GeneID" id="60394"/>
<dbReference type="KEGG" id="rno:60394"/>
<dbReference type="UCSC" id="RGD:621129">
    <property type="organism name" value="rat"/>
</dbReference>
<dbReference type="AGR" id="RGD:621129"/>
<dbReference type="CTD" id="116448"/>
<dbReference type="RGD" id="621129">
    <property type="gene designation" value="Olig1"/>
</dbReference>
<dbReference type="eggNOG" id="KOG3898">
    <property type="taxonomic scope" value="Eukaryota"/>
</dbReference>
<dbReference type="GeneTree" id="ENSGT00940000162722"/>
<dbReference type="HOGENOM" id="CLU_060337_0_0_1"/>
<dbReference type="InParanoid" id="Q9WUQ3"/>
<dbReference type="OMA" id="CKFPHLF"/>
<dbReference type="OrthoDB" id="10011855at2759"/>
<dbReference type="PhylomeDB" id="Q9WUQ3"/>
<dbReference type="TreeFam" id="TF322733"/>
<dbReference type="PRO" id="PR:Q9WUQ3"/>
<dbReference type="Proteomes" id="UP000002494">
    <property type="component" value="Chromosome 11"/>
</dbReference>
<dbReference type="GO" id="GO:0005634">
    <property type="term" value="C:nucleus"/>
    <property type="evidence" value="ECO:0000318"/>
    <property type="project" value="GO_Central"/>
</dbReference>
<dbReference type="GO" id="GO:0000981">
    <property type="term" value="F:DNA-binding transcription factor activity, RNA polymerase II-specific"/>
    <property type="evidence" value="ECO:0000318"/>
    <property type="project" value="GO_Central"/>
</dbReference>
<dbReference type="GO" id="GO:0070888">
    <property type="term" value="F:E-box binding"/>
    <property type="evidence" value="ECO:0000318"/>
    <property type="project" value="GO_Central"/>
</dbReference>
<dbReference type="GO" id="GO:0046983">
    <property type="term" value="F:protein dimerization activity"/>
    <property type="evidence" value="ECO:0007669"/>
    <property type="project" value="InterPro"/>
</dbReference>
<dbReference type="GO" id="GO:0061564">
    <property type="term" value="P:axon development"/>
    <property type="evidence" value="ECO:0000318"/>
    <property type="project" value="GO_Central"/>
</dbReference>
<dbReference type="GO" id="GO:0048663">
    <property type="term" value="P:neuron fate commitment"/>
    <property type="evidence" value="ECO:0000266"/>
    <property type="project" value="RGD"/>
</dbReference>
<dbReference type="GO" id="GO:0014003">
    <property type="term" value="P:oligodendrocyte development"/>
    <property type="evidence" value="ECO:0000266"/>
    <property type="project" value="RGD"/>
</dbReference>
<dbReference type="GO" id="GO:0045944">
    <property type="term" value="P:positive regulation of transcription by RNA polymerase II"/>
    <property type="evidence" value="ECO:0000318"/>
    <property type="project" value="GO_Central"/>
</dbReference>
<dbReference type="GO" id="GO:0007423">
    <property type="term" value="P:sensory organ development"/>
    <property type="evidence" value="ECO:0000318"/>
    <property type="project" value="GO_Central"/>
</dbReference>
<dbReference type="CDD" id="cd18942">
    <property type="entry name" value="bHLH_TS_OLIG1"/>
    <property type="match status" value="1"/>
</dbReference>
<dbReference type="FunFam" id="4.10.280.10:FF:000031">
    <property type="entry name" value="Oligodendrocyte transcription factor 3"/>
    <property type="match status" value="1"/>
</dbReference>
<dbReference type="Gene3D" id="4.10.280.10">
    <property type="entry name" value="Helix-loop-helix DNA-binding domain"/>
    <property type="match status" value="1"/>
</dbReference>
<dbReference type="InterPro" id="IPR011598">
    <property type="entry name" value="bHLH_dom"/>
</dbReference>
<dbReference type="InterPro" id="IPR050359">
    <property type="entry name" value="bHLH_transcription_factors"/>
</dbReference>
<dbReference type="InterPro" id="IPR036638">
    <property type="entry name" value="HLH_DNA-bd_sf"/>
</dbReference>
<dbReference type="InterPro" id="IPR032657">
    <property type="entry name" value="Olig1_bHLH"/>
</dbReference>
<dbReference type="PANTHER" id="PTHR19290">
    <property type="entry name" value="BASIC HELIX-LOOP-HELIX PROTEIN NEUROGENIN-RELATED"/>
    <property type="match status" value="1"/>
</dbReference>
<dbReference type="PANTHER" id="PTHR19290:SF7">
    <property type="entry name" value="OLIGODENDROCYTE TRANSCRIPTION FACTOR 1"/>
    <property type="match status" value="1"/>
</dbReference>
<dbReference type="Pfam" id="PF00010">
    <property type="entry name" value="HLH"/>
    <property type="match status" value="1"/>
</dbReference>
<dbReference type="SMART" id="SM00353">
    <property type="entry name" value="HLH"/>
    <property type="match status" value="1"/>
</dbReference>
<dbReference type="SUPFAM" id="SSF47459">
    <property type="entry name" value="HLH, helix-loop-helix DNA-binding domain"/>
    <property type="match status" value="1"/>
</dbReference>
<dbReference type="PROSITE" id="PS50888">
    <property type="entry name" value="BHLH"/>
    <property type="match status" value="1"/>
</dbReference>
<name>OLIG1_RAT</name>
<protein>
    <recommendedName>
        <fullName>Oligodendrocyte transcription factor 1</fullName>
        <shortName>Oligo1</shortName>
    </recommendedName>
    <alternativeName>
        <fullName>Olg-1 bHLH protein</fullName>
    </alternativeName>
</protein>
<comment type="function">
    <text evidence="1">Promotes formation and maturation of oligodendrocytes, especially within the brain. Cooperates with OLIG2 to establish the pMN domain of the embryonic neural tube (By similarity).</text>
</comment>
<comment type="subcellular location">
    <subcellularLocation>
        <location evidence="2">Nucleus</location>
    </subcellularLocation>
</comment>
<comment type="tissue specificity">
    <text evidence="4">Expressed specifically in the brain, including the corpus callosum, hippocampal and cerebral white matter. Also detected in cells scattered in gray matter, most probably in oligodendrocytes.</text>
</comment>
<comment type="developmental stage">
    <text evidence="4">Expressed in oligodendrocytes of the postnatal optical nerve up to day 30, then the number of expressing cells decreases.</text>
</comment>
<comment type="induction">
    <text evidence="4">By SHH.</text>
</comment>
<comment type="sequence caution" evidence="5">
    <conflict type="erroneous initiation">
        <sequence resource="EMBL-CDS" id="AAD34029"/>
    </conflict>
</comment>
<gene>
    <name type="primary">Olig1</name>
</gene>